<comment type="function">
    <text evidence="1">The glycine cleavage system catalyzes the degradation of glycine.</text>
</comment>
<comment type="catalytic activity">
    <reaction evidence="1">
        <text>N(6)-[(R)-S(8)-aminomethyldihydrolipoyl]-L-lysyl-[protein] + (6S)-5,6,7,8-tetrahydrofolate = N(6)-[(R)-dihydrolipoyl]-L-lysyl-[protein] + (6R)-5,10-methylene-5,6,7,8-tetrahydrofolate + NH4(+)</text>
        <dbReference type="Rhea" id="RHEA:16945"/>
        <dbReference type="Rhea" id="RHEA-COMP:10475"/>
        <dbReference type="Rhea" id="RHEA-COMP:10492"/>
        <dbReference type="ChEBI" id="CHEBI:15636"/>
        <dbReference type="ChEBI" id="CHEBI:28938"/>
        <dbReference type="ChEBI" id="CHEBI:57453"/>
        <dbReference type="ChEBI" id="CHEBI:83100"/>
        <dbReference type="ChEBI" id="CHEBI:83143"/>
        <dbReference type="EC" id="2.1.2.10"/>
    </reaction>
</comment>
<comment type="subunit">
    <text evidence="1">The glycine cleavage system is composed of four proteins: P, T, L and H.</text>
</comment>
<comment type="similarity">
    <text evidence="1">Belongs to the GcvT family.</text>
</comment>
<comment type="sequence caution" evidence="2">
    <conflict type="erroneous initiation">
        <sequence resource="EMBL-CDS" id="CAM08008"/>
    </conflict>
</comment>
<organism>
    <name type="scientific">Neisseria meningitidis serogroup A / serotype 4A (strain DSM 15465 / Z2491)</name>
    <dbReference type="NCBI Taxonomy" id="122587"/>
    <lineage>
        <taxon>Bacteria</taxon>
        <taxon>Pseudomonadati</taxon>
        <taxon>Pseudomonadota</taxon>
        <taxon>Betaproteobacteria</taxon>
        <taxon>Neisseriales</taxon>
        <taxon>Neisseriaceae</taxon>
        <taxon>Neisseria</taxon>
    </lineage>
</organism>
<gene>
    <name evidence="1" type="primary">gcvT</name>
    <name type="ordered locus">NMA0758</name>
</gene>
<accession>Q9JVP2</accession>
<accession>A1IQH7</accession>
<sequence>MITLKTTPFHQAHQDAGAKLVDFAGWELPIHYGSQIAEHEAVRTDAGMFDVSHMLVTDVAGANAKAFFRKLIANDVAKLAFVGKALYSALLNDNGGVIDDLIVYRTNEAETQYRIVSNGATREKDTAQFHKVGQEFGVSFNPRYDLGMLAVQGPKAIEKLLTVKPEWADVVHNLKPFQGADLGNDWFVARTGYTGEDGVEVILPGTEAVAFFKALQAAGVQPCGLGARDTLRMEAGMNLYGNDMDDDTSPLEAGMGWTVDLKDESRDFVGKAALLALKEKGVAVKQVGLLLGKGGILRAHMEVLTDKGKGETTSGVFSPSLKQSIAIARVPKDFDGDTAKVLIRGKEADVRVLKLPFVRNGQKQFD</sequence>
<protein>
    <recommendedName>
        <fullName evidence="1">Aminomethyltransferase</fullName>
        <ecNumber evidence="1">2.1.2.10</ecNumber>
    </recommendedName>
    <alternativeName>
        <fullName evidence="1">Glycine cleavage system T protein</fullName>
    </alternativeName>
</protein>
<keyword id="KW-0032">Aminotransferase</keyword>
<keyword id="KW-0808">Transferase</keyword>
<feature type="chain" id="PRO_0000122575" description="Aminomethyltransferase">
    <location>
        <begin position="1"/>
        <end position="366"/>
    </location>
</feature>
<reference key="1">
    <citation type="journal article" date="2000" name="Nature">
        <title>Complete DNA sequence of a serogroup A strain of Neisseria meningitidis Z2491.</title>
        <authorList>
            <person name="Parkhill J."/>
            <person name="Achtman M."/>
            <person name="James K.D."/>
            <person name="Bentley S.D."/>
            <person name="Churcher C.M."/>
            <person name="Klee S.R."/>
            <person name="Morelli G."/>
            <person name="Basham D."/>
            <person name="Brown D."/>
            <person name="Chillingworth T."/>
            <person name="Davies R.M."/>
            <person name="Davis P."/>
            <person name="Devlin K."/>
            <person name="Feltwell T."/>
            <person name="Hamlin N."/>
            <person name="Holroyd S."/>
            <person name="Jagels K."/>
            <person name="Leather S."/>
            <person name="Moule S."/>
            <person name="Mungall K.L."/>
            <person name="Quail M.A."/>
            <person name="Rajandream M.A."/>
            <person name="Rutherford K.M."/>
            <person name="Simmonds M."/>
            <person name="Skelton J."/>
            <person name="Whitehead S."/>
            <person name="Spratt B.G."/>
            <person name="Barrell B.G."/>
        </authorList>
    </citation>
    <scope>NUCLEOTIDE SEQUENCE [LARGE SCALE GENOMIC DNA]</scope>
    <source>
        <strain>DSM 15465 / Z2491</strain>
    </source>
</reference>
<proteinExistence type="inferred from homology"/>
<evidence type="ECO:0000255" key="1">
    <source>
        <dbReference type="HAMAP-Rule" id="MF_00259"/>
    </source>
</evidence>
<evidence type="ECO:0000305" key="2"/>
<dbReference type="EC" id="2.1.2.10" evidence="1"/>
<dbReference type="EMBL" id="AL157959">
    <property type="protein sequence ID" value="CAM08008.1"/>
    <property type="status" value="ALT_INIT"/>
    <property type="molecule type" value="Genomic_DNA"/>
</dbReference>
<dbReference type="PIR" id="G81919">
    <property type="entry name" value="G81919"/>
</dbReference>
<dbReference type="RefSeq" id="WP_002233621.1">
    <property type="nucleotide sequence ID" value="NC_003116.1"/>
</dbReference>
<dbReference type="SMR" id="Q9JVP2"/>
<dbReference type="EnsemblBacteria" id="CAM08008">
    <property type="protein sequence ID" value="CAM08008"/>
    <property type="gene ID" value="NMA0758"/>
</dbReference>
<dbReference type="GeneID" id="93386611"/>
<dbReference type="KEGG" id="nma:NMA0758"/>
<dbReference type="HOGENOM" id="CLU_007884_10_2_4"/>
<dbReference type="Proteomes" id="UP000000626">
    <property type="component" value="Chromosome"/>
</dbReference>
<dbReference type="GO" id="GO:0005829">
    <property type="term" value="C:cytosol"/>
    <property type="evidence" value="ECO:0007669"/>
    <property type="project" value="TreeGrafter"/>
</dbReference>
<dbReference type="GO" id="GO:0005960">
    <property type="term" value="C:glycine cleavage complex"/>
    <property type="evidence" value="ECO:0007669"/>
    <property type="project" value="InterPro"/>
</dbReference>
<dbReference type="GO" id="GO:0004047">
    <property type="term" value="F:aminomethyltransferase activity"/>
    <property type="evidence" value="ECO:0007669"/>
    <property type="project" value="UniProtKB-UniRule"/>
</dbReference>
<dbReference type="GO" id="GO:0008483">
    <property type="term" value="F:transaminase activity"/>
    <property type="evidence" value="ECO:0007669"/>
    <property type="project" value="UniProtKB-KW"/>
</dbReference>
<dbReference type="GO" id="GO:0019464">
    <property type="term" value="P:glycine decarboxylation via glycine cleavage system"/>
    <property type="evidence" value="ECO:0007669"/>
    <property type="project" value="UniProtKB-UniRule"/>
</dbReference>
<dbReference type="FunFam" id="3.30.70.1400:FF:000001">
    <property type="entry name" value="Aminomethyltransferase"/>
    <property type="match status" value="1"/>
</dbReference>
<dbReference type="FunFam" id="4.10.1250.10:FF:000001">
    <property type="entry name" value="Aminomethyltransferase"/>
    <property type="match status" value="1"/>
</dbReference>
<dbReference type="Gene3D" id="2.40.30.110">
    <property type="entry name" value="Aminomethyltransferase beta-barrel domains"/>
    <property type="match status" value="1"/>
</dbReference>
<dbReference type="Gene3D" id="3.30.70.1400">
    <property type="entry name" value="Aminomethyltransferase beta-barrel domains"/>
    <property type="match status" value="1"/>
</dbReference>
<dbReference type="Gene3D" id="4.10.1250.10">
    <property type="entry name" value="Aminomethyltransferase fragment"/>
    <property type="match status" value="1"/>
</dbReference>
<dbReference type="Gene3D" id="3.30.1360.120">
    <property type="entry name" value="Probable tRNA modification gtpase trme, domain 1"/>
    <property type="match status" value="1"/>
</dbReference>
<dbReference type="HAMAP" id="MF_00259">
    <property type="entry name" value="GcvT"/>
    <property type="match status" value="1"/>
</dbReference>
<dbReference type="InterPro" id="IPR006223">
    <property type="entry name" value="GCS_T"/>
</dbReference>
<dbReference type="InterPro" id="IPR022903">
    <property type="entry name" value="GCS_T_bac"/>
</dbReference>
<dbReference type="InterPro" id="IPR013977">
    <property type="entry name" value="GCST_C"/>
</dbReference>
<dbReference type="InterPro" id="IPR006222">
    <property type="entry name" value="GCV_T_N"/>
</dbReference>
<dbReference type="InterPro" id="IPR028896">
    <property type="entry name" value="GcvT/YgfZ/DmdA"/>
</dbReference>
<dbReference type="InterPro" id="IPR029043">
    <property type="entry name" value="GcvT/YgfZ_C"/>
</dbReference>
<dbReference type="InterPro" id="IPR027266">
    <property type="entry name" value="TrmE/GcvT_dom1"/>
</dbReference>
<dbReference type="NCBIfam" id="TIGR00528">
    <property type="entry name" value="gcvT"/>
    <property type="match status" value="1"/>
</dbReference>
<dbReference type="NCBIfam" id="NF001567">
    <property type="entry name" value="PRK00389.1"/>
    <property type="match status" value="1"/>
</dbReference>
<dbReference type="PANTHER" id="PTHR43757">
    <property type="entry name" value="AMINOMETHYLTRANSFERASE"/>
    <property type="match status" value="1"/>
</dbReference>
<dbReference type="PANTHER" id="PTHR43757:SF2">
    <property type="entry name" value="AMINOMETHYLTRANSFERASE, MITOCHONDRIAL"/>
    <property type="match status" value="1"/>
</dbReference>
<dbReference type="Pfam" id="PF01571">
    <property type="entry name" value="GCV_T"/>
    <property type="match status" value="1"/>
</dbReference>
<dbReference type="Pfam" id="PF08669">
    <property type="entry name" value="GCV_T_C"/>
    <property type="match status" value="1"/>
</dbReference>
<dbReference type="PIRSF" id="PIRSF006487">
    <property type="entry name" value="GcvT"/>
    <property type="match status" value="1"/>
</dbReference>
<dbReference type="SUPFAM" id="SSF101790">
    <property type="entry name" value="Aminomethyltransferase beta-barrel domain"/>
    <property type="match status" value="1"/>
</dbReference>
<dbReference type="SUPFAM" id="SSF103025">
    <property type="entry name" value="Folate-binding domain"/>
    <property type="match status" value="1"/>
</dbReference>
<name>GCST_NEIMA</name>